<name>ACCD_ALKEH</name>
<gene>
    <name evidence="1" type="primary">accD</name>
    <name type="ordered locus">Mlg_1238</name>
</gene>
<proteinExistence type="inferred from homology"/>
<reference key="1">
    <citation type="submission" date="2006-08" db="EMBL/GenBank/DDBJ databases">
        <title>Complete sequence of Alkalilimnicola ehrilichei MLHE-1.</title>
        <authorList>
            <person name="Copeland A."/>
            <person name="Lucas S."/>
            <person name="Lapidus A."/>
            <person name="Barry K."/>
            <person name="Detter J.C."/>
            <person name="Glavina del Rio T."/>
            <person name="Hammon N."/>
            <person name="Israni S."/>
            <person name="Dalin E."/>
            <person name="Tice H."/>
            <person name="Pitluck S."/>
            <person name="Sims D."/>
            <person name="Brettin T."/>
            <person name="Bruce D."/>
            <person name="Han C."/>
            <person name="Tapia R."/>
            <person name="Gilna P."/>
            <person name="Schmutz J."/>
            <person name="Larimer F."/>
            <person name="Land M."/>
            <person name="Hauser L."/>
            <person name="Kyrpides N."/>
            <person name="Mikhailova N."/>
            <person name="Oremland R.S."/>
            <person name="Hoeft S.E."/>
            <person name="Switzer-Blum J."/>
            <person name="Kulp T."/>
            <person name="King G."/>
            <person name="Tabita R."/>
            <person name="Witte B."/>
            <person name="Santini J.M."/>
            <person name="Basu P."/>
            <person name="Hollibaugh J.T."/>
            <person name="Xie G."/>
            <person name="Stolz J.F."/>
            <person name="Richardson P."/>
        </authorList>
    </citation>
    <scope>NUCLEOTIDE SEQUENCE [LARGE SCALE GENOMIC DNA]</scope>
    <source>
        <strain>ATCC BAA-1101 / DSM 17681 / MLHE-1</strain>
    </source>
</reference>
<organism>
    <name type="scientific">Alkalilimnicola ehrlichii (strain ATCC BAA-1101 / DSM 17681 / MLHE-1)</name>
    <dbReference type="NCBI Taxonomy" id="187272"/>
    <lineage>
        <taxon>Bacteria</taxon>
        <taxon>Pseudomonadati</taxon>
        <taxon>Pseudomonadota</taxon>
        <taxon>Gammaproteobacteria</taxon>
        <taxon>Chromatiales</taxon>
        <taxon>Ectothiorhodospiraceae</taxon>
        <taxon>Alkalilimnicola</taxon>
    </lineage>
</organism>
<feature type="chain" id="PRO_0000358951" description="Acetyl-coenzyme A carboxylase carboxyl transferase subunit beta">
    <location>
        <begin position="1"/>
        <end position="311"/>
    </location>
</feature>
<feature type="domain" description="CoA carboxyltransferase N-terminal" evidence="2">
    <location>
        <begin position="27"/>
        <end position="296"/>
    </location>
</feature>
<feature type="zinc finger region" description="C4-type" evidence="1">
    <location>
        <begin position="31"/>
        <end position="53"/>
    </location>
</feature>
<feature type="region of interest" description="Disordered" evidence="3">
    <location>
        <begin position="286"/>
        <end position="311"/>
    </location>
</feature>
<feature type="compositionally biased region" description="Low complexity" evidence="3">
    <location>
        <begin position="286"/>
        <end position="299"/>
    </location>
</feature>
<feature type="binding site" evidence="1">
    <location>
        <position position="31"/>
    </location>
    <ligand>
        <name>Zn(2+)</name>
        <dbReference type="ChEBI" id="CHEBI:29105"/>
    </ligand>
</feature>
<feature type="binding site" evidence="1">
    <location>
        <position position="34"/>
    </location>
    <ligand>
        <name>Zn(2+)</name>
        <dbReference type="ChEBI" id="CHEBI:29105"/>
    </ligand>
</feature>
<feature type="binding site" evidence="1">
    <location>
        <position position="50"/>
    </location>
    <ligand>
        <name>Zn(2+)</name>
        <dbReference type="ChEBI" id="CHEBI:29105"/>
    </ligand>
</feature>
<feature type="binding site" evidence="1">
    <location>
        <position position="53"/>
    </location>
    <ligand>
        <name>Zn(2+)</name>
        <dbReference type="ChEBI" id="CHEBI:29105"/>
    </ligand>
</feature>
<protein>
    <recommendedName>
        <fullName evidence="1">Acetyl-coenzyme A carboxylase carboxyl transferase subunit beta</fullName>
        <shortName evidence="1">ACCase subunit beta</shortName>
        <shortName evidence="1">Acetyl-CoA carboxylase carboxyltransferase subunit beta</shortName>
        <ecNumber evidence="1">2.1.3.15</ecNumber>
    </recommendedName>
</protein>
<dbReference type="EC" id="2.1.3.15" evidence="1"/>
<dbReference type="EMBL" id="CP000453">
    <property type="protein sequence ID" value="ABI56587.1"/>
    <property type="molecule type" value="Genomic_DNA"/>
</dbReference>
<dbReference type="RefSeq" id="WP_011628982.1">
    <property type="nucleotide sequence ID" value="NC_008340.1"/>
</dbReference>
<dbReference type="SMR" id="Q0A9A0"/>
<dbReference type="KEGG" id="aeh:Mlg_1238"/>
<dbReference type="eggNOG" id="COG0777">
    <property type="taxonomic scope" value="Bacteria"/>
</dbReference>
<dbReference type="HOGENOM" id="CLU_015486_1_0_6"/>
<dbReference type="OrthoDB" id="9772975at2"/>
<dbReference type="UniPathway" id="UPA00655">
    <property type="reaction ID" value="UER00711"/>
</dbReference>
<dbReference type="Proteomes" id="UP000001962">
    <property type="component" value="Chromosome"/>
</dbReference>
<dbReference type="GO" id="GO:0009329">
    <property type="term" value="C:acetate CoA-transferase complex"/>
    <property type="evidence" value="ECO:0007669"/>
    <property type="project" value="TreeGrafter"/>
</dbReference>
<dbReference type="GO" id="GO:0003989">
    <property type="term" value="F:acetyl-CoA carboxylase activity"/>
    <property type="evidence" value="ECO:0007669"/>
    <property type="project" value="InterPro"/>
</dbReference>
<dbReference type="GO" id="GO:0005524">
    <property type="term" value="F:ATP binding"/>
    <property type="evidence" value="ECO:0007669"/>
    <property type="project" value="UniProtKB-KW"/>
</dbReference>
<dbReference type="GO" id="GO:0016743">
    <property type="term" value="F:carboxyl- or carbamoyltransferase activity"/>
    <property type="evidence" value="ECO:0007669"/>
    <property type="project" value="UniProtKB-UniRule"/>
</dbReference>
<dbReference type="GO" id="GO:0008270">
    <property type="term" value="F:zinc ion binding"/>
    <property type="evidence" value="ECO:0007669"/>
    <property type="project" value="UniProtKB-UniRule"/>
</dbReference>
<dbReference type="GO" id="GO:0006633">
    <property type="term" value="P:fatty acid biosynthetic process"/>
    <property type="evidence" value="ECO:0007669"/>
    <property type="project" value="UniProtKB-KW"/>
</dbReference>
<dbReference type="GO" id="GO:2001295">
    <property type="term" value="P:malonyl-CoA biosynthetic process"/>
    <property type="evidence" value="ECO:0007669"/>
    <property type="project" value="UniProtKB-UniRule"/>
</dbReference>
<dbReference type="Gene3D" id="3.90.226.10">
    <property type="entry name" value="2-enoyl-CoA Hydratase, Chain A, domain 1"/>
    <property type="match status" value="1"/>
</dbReference>
<dbReference type="HAMAP" id="MF_01395">
    <property type="entry name" value="AcetylCoA_CT_beta"/>
    <property type="match status" value="1"/>
</dbReference>
<dbReference type="InterPro" id="IPR034733">
    <property type="entry name" value="AcCoA_carboxyl_beta"/>
</dbReference>
<dbReference type="InterPro" id="IPR000438">
    <property type="entry name" value="Acetyl_CoA_COase_Trfase_b_su"/>
</dbReference>
<dbReference type="InterPro" id="IPR029045">
    <property type="entry name" value="ClpP/crotonase-like_dom_sf"/>
</dbReference>
<dbReference type="InterPro" id="IPR011762">
    <property type="entry name" value="COA_CT_N"/>
</dbReference>
<dbReference type="InterPro" id="IPR041010">
    <property type="entry name" value="Znf-ACC"/>
</dbReference>
<dbReference type="NCBIfam" id="TIGR00515">
    <property type="entry name" value="accD"/>
    <property type="match status" value="1"/>
</dbReference>
<dbReference type="PANTHER" id="PTHR42995">
    <property type="entry name" value="ACETYL-COENZYME A CARBOXYLASE CARBOXYL TRANSFERASE SUBUNIT BETA, CHLOROPLASTIC"/>
    <property type="match status" value="1"/>
</dbReference>
<dbReference type="PANTHER" id="PTHR42995:SF5">
    <property type="entry name" value="ACETYL-COENZYME A CARBOXYLASE CARBOXYL TRANSFERASE SUBUNIT BETA, CHLOROPLASTIC"/>
    <property type="match status" value="1"/>
</dbReference>
<dbReference type="Pfam" id="PF01039">
    <property type="entry name" value="Carboxyl_trans"/>
    <property type="match status" value="1"/>
</dbReference>
<dbReference type="Pfam" id="PF17848">
    <property type="entry name" value="Zn_ribbon_ACC"/>
    <property type="match status" value="1"/>
</dbReference>
<dbReference type="PRINTS" id="PR01070">
    <property type="entry name" value="ACCCTRFRASEB"/>
</dbReference>
<dbReference type="SUPFAM" id="SSF52096">
    <property type="entry name" value="ClpP/crotonase"/>
    <property type="match status" value="1"/>
</dbReference>
<dbReference type="PROSITE" id="PS50980">
    <property type="entry name" value="COA_CT_NTER"/>
    <property type="match status" value="1"/>
</dbReference>
<accession>Q0A9A0</accession>
<keyword id="KW-0067">ATP-binding</keyword>
<keyword id="KW-0963">Cytoplasm</keyword>
<keyword id="KW-0275">Fatty acid biosynthesis</keyword>
<keyword id="KW-0276">Fatty acid metabolism</keyword>
<keyword id="KW-0444">Lipid biosynthesis</keyword>
<keyword id="KW-0443">Lipid metabolism</keyword>
<keyword id="KW-0479">Metal-binding</keyword>
<keyword id="KW-0547">Nucleotide-binding</keyword>
<keyword id="KW-1185">Reference proteome</keyword>
<keyword id="KW-0808">Transferase</keyword>
<keyword id="KW-0862">Zinc</keyword>
<keyword id="KW-0863">Zinc-finger</keyword>
<sequence>MSWFQKLMPSRIRTDASERSRSVPEGLWTKCGHCSAVLYRPELERNQEVCPKCGDHMRIGARRRLAGFLDAEGQVEIGADVQPVDALRFRDSKKYRDRLAQAQKGTGERDALVAMQGRLRGMPVVAVAFEFSFMGGSMGSVVGERFVRAADTAREQRVPLVCFSASGGARMQEGLFSLMQMAKTSAALARLSEEGVPFVSVLTDPTMGGVSASLAMLGDLVVAEPGALIGFAGPRVIEQTVRETLPEGFQRAEFLLEHGAIDQIIDRREMADRLHRILAMLTHQPAAEAADAPEAGEQPSEATDPVGEHWD</sequence>
<comment type="function">
    <text evidence="1">Component of the acetyl coenzyme A carboxylase (ACC) complex. Biotin carboxylase (BC) catalyzes the carboxylation of biotin on its carrier protein (BCCP) and then the CO(2) group is transferred by the transcarboxylase to acetyl-CoA to form malonyl-CoA.</text>
</comment>
<comment type="catalytic activity">
    <reaction evidence="1">
        <text>N(6)-carboxybiotinyl-L-lysyl-[protein] + acetyl-CoA = N(6)-biotinyl-L-lysyl-[protein] + malonyl-CoA</text>
        <dbReference type="Rhea" id="RHEA:54728"/>
        <dbReference type="Rhea" id="RHEA-COMP:10505"/>
        <dbReference type="Rhea" id="RHEA-COMP:10506"/>
        <dbReference type="ChEBI" id="CHEBI:57288"/>
        <dbReference type="ChEBI" id="CHEBI:57384"/>
        <dbReference type="ChEBI" id="CHEBI:83144"/>
        <dbReference type="ChEBI" id="CHEBI:83145"/>
        <dbReference type="EC" id="2.1.3.15"/>
    </reaction>
</comment>
<comment type="cofactor">
    <cofactor evidence="1">
        <name>Zn(2+)</name>
        <dbReference type="ChEBI" id="CHEBI:29105"/>
    </cofactor>
    <text evidence="1">Binds 1 zinc ion per subunit.</text>
</comment>
<comment type="pathway">
    <text evidence="1">Lipid metabolism; malonyl-CoA biosynthesis; malonyl-CoA from acetyl-CoA: step 1/1.</text>
</comment>
<comment type="subunit">
    <text evidence="1">Acetyl-CoA carboxylase is a heterohexamer composed of biotin carboxyl carrier protein (AccB), biotin carboxylase (AccC) and two subunits each of ACCase subunit alpha (AccA) and ACCase subunit beta (AccD).</text>
</comment>
<comment type="subcellular location">
    <subcellularLocation>
        <location evidence="1">Cytoplasm</location>
    </subcellularLocation>
</comment>
<comment type="similarity">
    <text evidence="1">Belongs to the AccD/PCCB family.</text>
</comment>
<evidence type="ECO:0000255" key="1">
    <source>
        <dbReference type="HAMAP-Rule" id="MF_01395"/>
    </source>
</evidence>
<evidence type="ECO:0000255" key="2">
    <source>
        <dbReference type="PROSITE-ProRule" id="PRU01136"/>
    </source>
</evidence>
<evidence type="ECO:0000256" key="3">
    <source>
        <dbReference type="SAM" id="MobiDB-lite"/>
    </source>
</evidence>